<protein>
    <recommendedName>
        <fullName evidence="2">Small ribosomal subunit protein mS23</fullName>
    </recommendedName>
    <alternativeName>
        <fullName>37S ribosomal protein S25, mitochondrial</fullName>
    </alternativeName>
</protein>
<accession>Q6BUH8</accession>
<feature type="chain" id="PRO_0000343550" description="Small ribosomal subunit protein mS23">
    <location>
        <begin position="1"/>
        <end position="285"/>
    </location>
</feature>
<keyword id="KW-0496">Mitochondrion</keyword>
<keyword id="KW-1185">Reference proteome</keyword>
<keyword id="KW-0687">Ribonucleoprotein</keyword>
<keyword id="KW-0689">Ribosomal protein</keyword>
<organism>
    <name type="scientific">Debaryomyces hansenii (strain ATCC 36239 / CBS 767 / BCRC 21394 / JCM 1990 / NBRC 0083 / IGC 2968)</name>
    <name type="common">Yeast</name>
    <name type="synonym">Torulaspora hansenii</name>
    <dbReference type="NCBI Taxonomy" id="284592"/>
    <lineage>
        <taxon>Eukaryota</taxon>
        <taxon>Fungi</taxon>
        <taxon>Dikarya</taxon>
        <taxon>Ascomycota</taxon>
        <taxon>Saccharomycotina</taxon>
        <taxon>Pichiomycetes</taxon>
        <taxon>Debaryomycetaceae</taxon>
        <taxon>Debaryomyces</taxon>
    </lineage>
</organism>
<evidence type="ECO:0000250" key="1"/>
<evidence type="ECO:0000305" key="2"/>
<comment type="subunit">
    <text evidence="1">Component of the mitochondrial small ribosomal subunit.</text>
</comment>
<comment type="subcellular location">
    <subcellularLocation>
        <location evidence="1">Mitochondrion</location>
    </subcellularLocation>
</comment>
<comment type="similarity">
    <text evidence="2">Belongs to the mitochondrion-specific ribosomal protein mS23 family.</text>
</comment>
<sequence length="285" mass="32915">MKIQTKATGVLERTSHYLKAGILREKPAWFNVVGSHPPMMDLTKKPKKFDTQAQENDPSRSLFQKKKGGDLFKTRSNIYDRQQRHNSISRVPKLEFLEDQLRDVFYHQHPWEFSRPKTLIENEGNESSQCDWSHMLQLYKPLDGESVVQRTLWLLQDSKKTGKTMSLFEAYDQARFEFYRLRMEEEMSSTVSKEESSMYGAIYPSTNLDWGIKKEQEYIDAWTKVAGEKTKVRDANKDGRTANGSMGADDVVESKQSIWETVFDASDVSEASLEENSNAQTKDNA</sequence>
<dbReference type="EMBL" id="CR382135">
    <property type="protein sequence ID" value="CAG86212.1"/>
    <property type="molecule type" value="Genomic_DNA"/>
</dbReference>
<dbReference type="RefSeq" id="XP_458141.1">
    <property type="nucleotide sequence ID" value="XM_458141.1"/>
</dbReference>
<dbReference type="SMR" id="Q6BUH8"/>
<dbReference type="FunCoup" id="Q6BUH8">
    <property type="interactions" value="162"/>
</dbReference>
<dbReference type="STRING" id="284592.Q6BUH8"/>
<dbReference type="GeneID" id="2900447"/>
<dbReference type="KEGG" id="dha:DEHA2C10538g"/>
<dbReference type="VEuPathDB" id="FungiDB:DEHA2C10538g"/>
<dbReference type="eggNOG" id="ENOG502RZQQ">
    <property type="taxonomic scope" value="Eukaryota"/>
</dbReference>
<dbReference type="HOGENOM" id="CLU_081350_0_0_1"/>
<dbReference type="InParanoid" id="Q6BUH8"/>
<dbReference type="OMA" id="ENWKIWA"/>
<dbReference type="OrthoDB" id="5542239at2759"/>
<dbReference type="Proteomes" id="UP000000599">
    <property type="component" value="Chromosome C"/>
</dbReference>
<dbReference type="GO" id="GO:0005763">
    <property type="term" value="C:mitochondrial small ribosomal subunit"/>
    <property type="evidence" value="ECO:0007669"/>
    <property type="project" value="EnsemblFungi"/>
</dbReference>
<dbReference type="GO" id="GO:0003735">
    <property type="term" value="F:structural constituent of ribosome"/>
    <property type="evidence" value="ECO:0007669"/>
    <property type="project" value="EnsemblFungi"/>
</dbReference>
<dbReference type="InterPro" id="IPR016939">
    <property type="entry name" value="Ribosomal_mS23_fun"/>
</dbReference>
<dbReference type="PANTHER" id="PTHR37799">
    <property type="entry name" value="37S RIBOSOMAL PROTEIN S25, MITOCHONDRIAL"/>
    <property type="match status" value="1"/>
</dbReference>
<dbReference type="PANTHER" id="PTHR37799:SF1">
    <property type="entry name" value="SMALL RIBOSOMAL SUBUNIT PROTEIN MS23"/>
    <property type="match status" value="1"/>
</dbReference>
<dbReference type="Pfam" id="PF13741">
    <property type="entry name" value="MRP-S25"/>
    <property type="match status" value="1"/>
</dbReference>
<dbReference type="PIRSF" id="PIRSF029764">
    <property type="entry name" value="RSM25"/>
    <property type="match status" value="1"/>
</dbReference>
<proteinExistence type="inferred from homology"/>
<gene>
    <name type="primary">RSM25</name>
    <name type="ordered locus">DEHA2C10538g</name>
</gene>
<name>RT25_DEBHA</name>
<reference key="1">
    <citation type="journal article" date="2004" name="Nature">
        <title>Genome evolution in yeasts.</title>
        <authorList>
            <person name="Dujon B."/>
            <person name="Sherman D."/>
            <person name="Fischer G."/>
            <person name="Durrens P."/>
            <person name="Casaregola S."/>
            <person name="Lafontaine I."/>
            <person name="de Montigny J."/>
            <person name="Marck C."/>
            <person name="Neuveglise C."/>
            <person name="Talla E."/>
            <person name="Goffard N."/>
            <person name="Frangeul L."/>
            <person name="Aigle M."/>
            <person name="Anthouard V."/>
            <person name="Babour A."/>
            <person name="Barbe V."/>
            <person name="Barnay S."/>
            <person name="Blanchin S."/>
            <person name="Beckerich J.-M."/>
            <person name="Beyne E."/>
            <person name="Bleykasten C."/>
            <person name="Boisrame A."/>
            <person name="Boyer J."/>
            <person name="Cattolico L."/>
            <person name="Confanioleri F."/>
            <person name="de Daruvar A."/>
            <person name="Despons L."/>
            <person name="Fabre E."/>
            <person name="Fairhead C."/>
            <person name="Ferry-Dumazet H."/>
            <person name="Groppi A."/>
            <person name="Hantraye F."/>
            <person name="Hennequin C."/>
            <person name="Jauniaux N."/>
            <person name="Joyet P."/>
            <person name="Kachouri R."/>
            <person name="Kerrest A."/>
            <person name="Koszul R."/>
            <person name="Lemaire M."/>
            <person name="Lesur I."/>
            <person name="Ma L."/>
            <person name="Muller H."/>
            <person name="Nicaud J.-M."/>
            <person name="Nikolski M."/>
            <person name="Oztas S."/>
            <person name="Ozier-Kalogeropoulos O."/>
            <person name="Pellenz S."/>
            <person name="Potier S."/>
            <person name="Richard G.-F."/>
            <person name="Straub M.-L."/>
            <person name="Suleau A."/>
            <person name="Swennen D."/>
            <person name="Tekaia F."/>
            <person name="Wesolowski-Louvel M."/>
            <person name="Westhof E."/>
            <person name="Wirth B."/>
            <person name="Zeniou-Meyer M."/>
            <person name="Zivanovic Y."/>
            <person name="Bolotin-Fukuhara M."/>
            <person name="Thierry A."/>
            <person name="Bouchier C."/>
            <person name="Caudron B."/>
            <person name="Scarpelli C."/>
            <person name="Gaillardin C."/>
            <person name="Weissenbach J."/>
            <person name="Wincker P."/>
            <person name="Souciet J.-L."/>
        </authorList>
    </citation>
    <scope>NUCLEOTIDE SEQUENCE [LARGE SCALE GENOMIC DNA]</scope>
    <source>
        <strain>ATCC 36239 / CBS 767 / BCRC 21394 / JCM 1990 / NBRC 0083 / IGC 2968</strain>
    </source>
</reference>